<reference key="1">
    <citation type="journal article" date="1987" name="J. Mol. Evol.">
        <title>Evolutionary conservation of the 3' ends of members of a family of giant secretory protein genes in Chironomus pallidivittatus.</title>
        <authorList>
            <person name="Saiga H."/>
            <person name="Grond C."/>
            <person name="Schmidt E.R."/>
            <person name="Edstroem J.-E."/>
        </authorList>
    </citation>
    <scope>NUCLEOTIDE SEQUENCE [GENOMIC DNA]</scope>
    <source>
        <tissue>Salivary gland</tissue>
    </source>
</reference>
<comment type="function">
    <text>Used by the larvae to construct a supramolecular structure, the larval tube.</text>
</comment>
<comment type="subcellular location">
    <subcellularLocation>
        <location>Secreted</location>
    </subcellularLocation>
</comment>
<comment type="tissue specificity">
    <text>Salivary gland.</text>
</comment>
<sequence length="162" mass="17922">CDDAMRKTESDKCTNIGGKFDPSTCKCTPETVTEGPTTCLESSESDEVTTKKPCDCTCAPDCKRRKMIIDVLLKYFYRDVYDKDCCKKNCDCDGAKFPECEESNSKQSGMFDILAKLFKPQGGDFEAGSVEVDGKKLTSEKKEKFGKALQDAVKGLEDILNS</sequence>
<dbReference type="EMBL" id="X05622">
    <property type="protein sequence ID" value="CAA29109.1"/>
    <property type="molecule type" value="Genomic_DNA"/>
</dbReference>
<dbReference type="PIR" id="B29662">
    <property type="entry name" value="B29662"/>
</dbReference>
<dbReference type="GO" id="GO:0005576">
    <property type="term" value="C:extracellular region"/>
    <property type="evidence" value="ECO:0007669"/>
    <property type="project" value="UniProtKB-SubCell"/>
</dbReference>
<accession>P08725</accession>
<feature type="chain" id="PRO_0000064824" description="Balbiani ring protein 2">
    <location>
        <begin position="1" status="less than"/>
        <end position="162"/>
    </location>
</feature>
<feature type="region of interest" description="Last constant region">
    <location>
        <begin position="1"/>
        <end position="31"/>
    </location>
</feature>
<feature type="region of interest" description="Last Cys-1 repeat">
    <location>
        <begin position="32"/>
        <end position="51"/>
    </location>
</feature>
<feature type="region of interest" description="Unique region">
    <location>
        <begin position="52"/>
        <end position="162"/>
    </location>
</feature>
<feature type="non-terminal residue">
    <location>
        <position position="1"/>
    </location>
</feature>
<proteinExistence type="evidence at transcript level"/>
<gene>
    <name type="primary">BR2</name>
</gene>
<protein>
    <recommendedName>
        <fullName>Balbiani ring protein 2</fullName>
    </recommendedName>
    <alternativeName>
        <fullName>Giant secretory protein I-B</fullName>
        <shortName>GSP-IB</shortName>
    </alternativeName>
</protein>
<keyword id="KW-0677">Repeat</keyword>
<keyword id="KW-0964">Secreted</keyword>
<organism>
    <name type="scientific">Chironomus pallidivittatus</name>
    <name type="common">Midge</name>
    <name type="synonym">Camptochironomus pallidivittatus</name>
    <dbReference type="NCBI Taxonomy" id="7151"/>
    <lineage>
        <taxon>Eukaryota</taxon>
        <taxon>Metazoa</taxon>
        <taxon>Ecdysozoa</taxon>
        <taxon>Arthropoda</taxon>
        <taxon>Hexapoda</taxon>
        <taxon>Insecta</taxon>
        <taxon>Pterygota</taxon>
        <taxon>Neoptera</taxon>
        <taxon>Endopterygota</taxon>
        <taxon>Diptera</taxon>
        <taxon>Nematocera</taxon>
        <taxon>Chironomoidea</taxon>
        <taxon>Chironomidae</taxon>
        <taxon>Chironominae</taxon>
        <taxon>Chironomus</taxon>
    </lineage>
</organism>
<name>BAR2_CHIPA</name>